<comment type="function">
    <text evidence="1">Catalyzes the attachment of alanine to tRNA(Ala) in a two-step reaction: alanine is first activated by ATP to form Ala-AMP and then transferred to the acceptor end of tRNA(Ala). Also edits incorrectly charged Ser-tRNA(Ala) and Gly-tRNA(Ala) via its editing domain.</text>
</comment>
<comment type="catalytic activity">
    <reaction evidence="1">
        <text>tRNA(Ala) + L-alanine + ATP = L-alanyl-tRNA(Ala) + AMP + diphosphate</text>
        <dbReference type="Rhea" id="RHEA:12540"/>
        <dbReference type="Rhea" id="RHEA-COMP:9657"/>
        <dbReference type="Rhea" id="RHEA-COMP:9923"/>
        <dbReference type="ChEBI" id="CHEBI:30616"/>
        <dbReference type="ChEBI" id="CHEBI:33019"/>
        <dbReference type="ChEBI" id="CHEBI:57972"/>
        <dbReference type="ChEBI" id="CHEBI:78442"/>
        <dbReference type="ChEBI" id="CHEBI:78497"/>
        <dbReference type="ChEBI" id="CHEBI:456215"/>
        <dbReference type="EC" id="6.1.1.7"/>
    </reaction>
</comment>
<comment type="cofactor">
    <cofactor evidence="1">
        <name>Zn(2+)</name>
        <dbReference type="ChEBI" id="CHEBI:29105"/>
    </cofactor>
    <text evidence="1">Binds 1 zinc ion per subunit.</text>
</comment>
<comment type="subcellular location">
    <subcellularLocation>
        <location evidence="1">Cytoplasm</location>
    </subcellularLocation>
</comment>
<comment type="domain">
    <text evidence="1">Consists of three domains; the N-terminal catalytic domain, the editing domain and the C-terminal C-Ala domain. The editing domain removes incorrectly charged amino acids, while the C-Ala domain, along with tRNA(Ala), serves as a bridge to cooperatively bring together the editing and aminoacylation centers thus stimulating deacylation of misacylated tRNAs.</text>
</comment>
<comment type="similarity">
    <text evidence="1">Belongs to the class-II aminoacyl-tRNA synthetase family.</text>
</comment>
<accession>C4KIK1</accession>
<organism>
    <name type="scientific">Saccharolobus islandicus (strain M.16.4 / Kamchatka #3)</name>
    <name type="common">Sulfolobus islandicus</name>
    <dbReference type="NCBI Taxonomy" id="426118"/>
    <lineage>
        <taxon>Archaea</taxon>
        <taxon>Thermoproteota</taxon>
        <taxon>Thermoprotei</taxon>
        <taxon>Sulfolobales</taxon>
        <taxon>Sulfolobaceae</taxon>
        <taxon>Saccharolobus</taxon>
    </lineage>
</organism>
<protein>
    <recommendedName>
        <fullName evidence="1">Alanine--tRNA ligase</fullName>
        <ecNumber evidence="1">6.1.1.7</ecNumber>
    </recommendedName>
    <alternativeName>
        <fullName evidence="1">Alanyl-tRNA synthetase</fullName>
        <shortName evidence="1">AlaRS</shortName>
    </alternativeName>
</protein>
<evidence type="ECO:0000255" key="1">
    <source>
        <dbReference type="HAMAP-Rule" id="MF_00036"/>
    </source>
</evidence>
<keyword id="KW-0030">Aminoacyl-tRNA synthetase</keyword>
<keyword id="KW-0067">ATP-binding</keyword>
<keyword id="KW-0963">Cytoplasm</keyword>
<keyword id="KW-0436">Ligase</keyword>
<keyword id="KW-0479">Metal-binding</keyword>
<keyword id="KW-0547">Nucleotide-binding</keyword>
<keyword id="KW-0648">Protein biosynthesis</keyword>
<keyword id="KW-0694">RNA-binding</keyword>
<keyword id="KW-0820">tRNA-binding</keyword>
<keyword id="KW-0862">Zinc</keyword>
<gene>
    <name evidence="1" type="primary">alaS</name>
    <name type="ordered locus">M164_1812</name>
</gene>
<sequence length="900" mass="103016">MKASEEEYRLNFFIKNDFKRKICKSCKTPFWTRDEKKEYCSDIPCTDYYFFDINIKSQPLTVKEAREKFLSFFEKRGHTRISPKPVLARWRDDLYLTIASIVDFQPHVTSGLVPPPANPLVVSQPSIRLEDIDNVGITFGRHLTTFEMAAHHAFNYPDHYVYWKDETTAYATEFFTKELGIPEEELNFKESWWEGGGNAGPCLEVTVGGLELATLVFMQYKITDNGNYTPLKLKIVDTGYGVERIAWITQKTPSAFHAIYGNLVYKFFNKIGVAYIDETLLKVASRFAGKIDPDNPDTIKIHRQMVSKELGIDIKAVEEELDRAAKVFQILDHTKTIMLMLADGLVPSNSGEGYLGRLVIRRALKVLRLLKSDVRLYELVKEQIDFWKEDFPQVLKNKDYILDAVELEQQRFEKILEKVPSIASTLARKSEITTEDLIQVYDSNGIPPDLLEEELKKKSVKFELPRNFYALVAKRHQTSTIKSVYDKVKLPKDMLEYITALQPTEKLYYKDQYMRSFEGKVLGVYKNYLILDKTTFYPEGGGQLGDTGLIIDEKSSKRYEVIDTQKVNDVIVHILKEEPSTIKVGDNVRGEINWERRYRLMRHHTVTHVILAAAKKVLGEHVWQAGAEKTPEKGRLDITHHKTLTEEEVKLIENYANSVISDRRPVKPLEMNRMEAEMKYGVSIYEGGVPNSATIRLLEIKDWDIESCGGTHVSNTSEIGAVKIINVERIQDGVIRLEYVAGPALVDYIRETEAKIVEASKIIGSSPDQLTSRLRRLLNEIEEKNNLIIQYRRIIETELLNNLKPYEINGNKIYIIEGLGDEEENKEILRKLTSTDNTIAISISDNRLQIATSKNMRVDKIVEELLKGGGKGGGKGTFANVILNSKKSKEEIIEIVRKSL</sequence>
<dbReference type="EC" id="6.1.1.7" evidence="1"/>
<dbReference type="EMBL" id="CP001402">
    <property type="protein sequence ID" value="ACR42415.1"/>
    <property type="molecule type" value="Genomic_DNA"/>
</dbReference>
<dbReference type="RefSeq" id="WP_012711740.1">
    <property type="nucleotide sequence ID" value="NC_012726.1"/>
</dbReference>
<dbReference type="SMR" id="C4KIK1"/>
<dbReference type="GeneID" id="84062116"/>
<dbReference type="KEGG" id="sid:M164_1812"/>
<dbReference type="HOGENOM" id="CLU_004485_4_0_2"/>
<dbReference type="Proteomes" id="UP000001479">
    <property type="component" value="Chromosome"/>
</dbReference>
<dbReference type="GO" id="GO:0005737">
    <property type="term" value="C:cytoplasm"/>
    <property type="evidence" value="ECO:0007669"/>
    <property type="project" value="UniProtKB-SubCell"/>
</dbReference>
<dbReference type="GO" id="GO:0004813">
    <property type="term" value="F:alanine-tRNA ligase activity"/>
    <property type="evidence" value="ECO:0007669"/>
    <property type="project" value="UniProtKB-UniRule"/>
</dbReference>
<dbReference type="GO" id="GO:0002161">
    <property type="term" value="F:aminoacyl-tRNA deacylase activity"/>
    <property type="evidence" value="ECO:0007669"/>
    <property type="project" value="TreeGrafter"/>
</dbReference>
<dbReference type="GO" id="GO:0005524">
    <property type="term" value="F:ATP binding"/>
    <property type="evidence" value="ECO:0007669"/>
    <property type="project" value="UniProtKB-UniRule"/>
</dbReference>
<dbReference type="GO" id="GO:0000049">
    <property type="term" value="F:tRNA binding"/>
    <property type="evidence" value="ECO:0007669"/>
    <property type="project" value="UniProtKB-KW"/>
</dbReference>
<dbReference type="GO" id="GO:0008270">
    <property type="term" value="F:zinc ion binding"/>
    <property type="evidence" value="ECO:0007669"/>
    <property type="project" value="UniProtKB-UniRule"/>
</dbReference>
<dbReference type="GO" id="GO:0006419">
    <property type="term" value="P:alanyl-tRNA aminoacylation"/>
    <property type="evidence" value="ECO:0007669"/>
    <property type="project" value="UniProtKB-UniRule"/>
</dbReference>
<dbReference type="CDD" id="cd00673">
    <property type="entry name" value="AlaRS_core"/>
    <property type="match status" value="1"/>
</dbReference>
<dbReference type="FunFam" id="3.30.54.20:FF:000004">
    <property type="entry name" value="Alanine--tRNA ligase"/>
    <property type="match status" value="1"/>
</dbReference>
<dbReference type="FunFam" id="3.30.930.10:FF:000056">
    <property type="entry name" value="Alanine--tRNA ligase"/>
    <property type="match status" value="1"/>
</dbReference>
<dbReference type="FunFam" id="3.30.980.10:FF:000004">
    <property type="entry name" value="Alanine--tRNA ligase, cytoplasmic"/>
    <property type="match status" value="1"/>
</dbReference>
<dbReference type="Gene3D" id="2.40.30.130">
    <property type="match status" value="1"/>
</dbReference>
<dbReference type="Gene3D" id="3.30.54.20">
    <property type="match status" value="1"/>
</dbReference>
<dbReference type="Gene3D" id="3.30.930.10">
    <property type="entry name" value="Bira Bifunctional Protein, Domain 2"/>
    <property type="match status" value="1"/>
</dbReference>
<dbReference type="Gene3D" id="3.30.980.10">
    <property type="entry name" value="Threonyl-trna Synthetase, Chain A, domain 2"/>
    <property type="match status" value="1"/>
</dbReference>
<dbReference type="HAMAP" id="MF_00036_A">
    <property type="entry name" value="Ala_tRNA_synth_A"/>
    <property type="match status" value="1"/>
</dbReference>
<dbReference type="InterPro" id="IPR045864">
    <property type="entry name" value="aa-tRNA-synth_II/BPL/LPL"/>
</dbReference>
<dbReference type="InterPro" id="IPR002318">
    <property type="entry name" value="Ala-tRNA-lgiase_IIc"/>
</dbReference>
<dbReference type="InterPro" id="IPR018162">
    <property type="entry name" value="Ala-tRNA-ligase_IIc_anticod-bd"/>
</dbReference>
<dbReference type="InterPro" id="IPR018165">
    <property type="entry name" value="Ala-tRNA-synth_IIc_core"/>
</dbReference>
<dbReference type="InterPro" id="IPR018164">
    <property type="entry name" value="Ala-tRNA-synth_IIc_N"/>
</dbReference>
<dbReference type="InterPro" id="IPR022429">
    <property type="entry name" value="Ala-tRNA_lgiase_arc"/>
</dbReference>
<dbReference type="InterPro" id="IPR050058">
    <property type="entry name" value="Ala-tRNA_ligase"/>
</dbReference>
<dbReference type="InterPro" id="IPR018163">
    <property type="entry name" value="Thr/Ala-tRNA-synth_IIc_edit"/>
</dbReference>
<dbReference type="InterPro" id="IPR009000">
    <property type="entry name" value="Transl_B-barrel_sf"/>
</dbReference>
<dbReference type="InterPro" id="IPR012947">
    <property type="entry name" value="tRNA_SAD"/>
</dbReference>
<dbReference type="NCBIfam" id="TIGR03683">
    <property type="entry name" value="A-tRNA_syn_arch"/>
    <property type="match status" value="1"/>
</dbReference>
<dbReference type="NCBIfam" id="TIGR00344">
    <property type="entry name" value="alaS"/>
    <property type="match status" value="1"/>
</dbReference>
<dbReference type="PANTHER" id="PTHR11777:SF9">
    <property type="entry name" value="ALANINE--TRNA LIGASE, CYTOPLASMIC"/>
    <property type="match status" value="1"/>
</dbReference>
<dbReference type="PANTHER" id="PTHR11777">
    <property type="entry name" value="ALANYL-TRNA SYNTHETASE"/>
    <property type="match status" value="1"/>
</dbReference>
<dbReference type="Pfam" id="PF01411">
    <property type="entry name" value="tRNA-synt_2c"/>
    <property type="match status" value="1"/>
</dbReference>
<dbReference type="Pfam" id="PF07973">
    <property type="entry name" value="tRNA_SAD"/>
    <property type="match status" value="1"/>
</dbReference>
<dbReference type="PRINTS" id="PR00980">
    <property type="entry name" value="TRNASYNTHALA"/>
</dbReference>
<dbReference type="SMART" id="SM00863">
    <property type="entry name" value="tRNA_SAD"/>
    <property type="match status" value="1"/>
</dbReference>
<dbReference type="SUPFAM" id="SSF55681">
    <property type="entry name" value="Class II aaRS and biotin synthetases"/>
    <property type="match status" value="1"/>
</dbReference>
<dbReference type="SUPFAM" id="SSF101353">
    <property type="entry name" value="Putative anticodon-binding domain of alanyl-tRNA synthetase (AlaRS)"/>
    <property type="match status" value="1"/>
</dbReference>
<dbReference type="SUPFAM" id="SSF55186">
    <property type="entry name" value="ThrRS/AlaRS common domain"/>
    <property type="match status" value="1"/>
</dbReference>
<dbReference type="SUPFAM" id="SSF50447">
    <property type="entry name" value="Translation proteins"/>
    <property type="match status" value="1"/>
</dbReference>
<dbReference type="PROSITE" id="PS50860">
    <property type="entry name" value="AA_TRNA_LIGASE_II_ALA"/>
    <property type="match status" value="1"/>
</dbReference>
<feature type="chain" id="PRO_1000202047" description="Alanine--tRNA ligase">
    <location>
        <begin position="1"/>
        <end position="900"/>
    </location>
</feature>
<feature type="binding site" evidence="1">
    <location>
        <position position="604"/>
    </location>
    <ligand>
        <name>Zn(2+)</name>
        <dbReference type="ChEBI" id="CHEBI:29105"/>
    </ligand>
</feature>
<feature type="binding site" evidence="1">
    <location>
        <position position="608"/>
    </location>
    <ligand>
        <name>Zn(2+)</name>
        <dbReference type="ChEBI" id="CHEBI:29105"/>
    </ligand>
</feature>
<feature type="binding site" evidence="1">
    <location>
        <position position="708"/>
    </location>
    <ligand>
        <name>Zn(2+)</name>
        <dbReference type="ChEBI" id="CHEBI:29105"/>
    </ligand>
</feature>
<feature type="binding site" evidence="1">
    <location>
        <position position="712"/>
    </location>
    <ligand>
        <name>Zn(2+)</name>
        <dbReference type="ChEBI" id="CHEBI:29105"/>
    </ligand>
</feature>
<reference key="1">
    <citation type="journal article" date="2009" name="Proc. Natl. Acad. Sci. U.S.A.">
        <title>Biogeography of the Sulfolobus islandicus pan-genome.</title>
        <authorList>
            <person name="Reno M.L."/>
            <person name="Held N.L."/>
            <person name="Fields C.J."/>
            <person name="Burke P.V."/>
            <person name="Whitaker R.J."/>
        </authorList>
    </citation>
    <scope>NUCLEOTIDE SEQUENCE [LARGE SCALE GENOMIC DNA]</scope>
    <source>
        <strain>M.16.4 / Kamchatka #3</strain>
    </source>
</reference>
<name>SYA_SACI6</name>
<proteinExistence type="inferred from homology"/>